<organism>
    <name type="scientific">Escherichia coli</name>
    <dbReference type="NCBI Taxonomy" id="562"/>
    <lineage>
        <taxon>Bacteria</taxon>
        <taxon>Pseudomonadati</taxon>
        <taxon>Pseudomonadota</taxon>
        <taxon>Gammaproteobacteria</taxon>
        <taxon>Enterobacterales</taxon>
        <taxon>Enterobacteriaceae</taxon>
        <taxon>Escherichia</taxon>
    </lineage>
</organism>
<keyword id="KW-0067">ATP-binding</keyword>
<keyword id="KW-0997">Cell inner membrane</keyword>
<keyword id="KW-1003">Cell membrane</keyword>
<keyword id="KW-0472">Membrane</keyword>
<keyword id="KW-0547">Nucleotide-binding</keyword>
<keyword id="KW-0813">Transport</keyword>
<proteinExistence type="evidence at protein level"/>
<dbReference type="EMBL" id="M57381">
    <property type="protein sequence ID" value="AAA24047.1"/>
    <property type="molecule type" value="Genomic_DNA"/>
</dbReference>
<dbReference type="PIR" id="B42469">
    <property type="entry name" value="B42469"/>
</dbReference>
<dbReference type="RefSeq" id="WP_000590258.1">
    <property type="nucleotide sequence ID" value="NZ_WVVR01000003.1"/>
</dbReference>
<dbReference type="SMR" id="P23888"/>
<dbReference type="OMA" id="VHIVYRV"/>
<dbReference type="GO" id="GO:0005886">
    <property type="term" value="C:plasma membrane"/>
    <property type="evidence" value="ECO:0007669"/>
    <property type="project" value="UniProtKB-SubCell"/>
</dbReference>
<dbReference type="GO" id="GO:0140359">
    <property type="term" value="F:ABC-type transporter activity"/>
    <property type="evidence" value="ECO:0007669"/>
    <property type="project" value="InterPro"/>
</dbReference>
<dbReference type="GO" id="GO:0005524">
    <property type="term" value="F:ATP binding"/>
    <property type="evidence" value="ECO:0007669"/>
    <property type="project" value="UniProtKB-KW"/>
</dbReference>
<dbReference type="GO" id="GO:0016887">
    <property type="term" value="F:ATP hydrolysis activity"/>
    <property type="evidence" value="ECO:0007669"/>
    <property type="project" value="InterPro"/>
</dbReference>
<dbReference type="CDD" id="cd03220">
    <property type="entry name" value="ABC_KpsT_Wzt"/>
    <property type="match status" value="1"/>
</dbReference>
<dbReference type="Gene3D" id="3.40.50.300">
    <property type="entry name" value="P-loop containing nucleotide triphosphate hydrolases"/>
    <property type="match status" value="1"/>
</dbReference>
<dbReference type="InterPro" id="IPR003593">
    <property type="entry name" value="AAA+_ATPase"/>
</dbReference>
<dbReference type="InterPro" id="IPR003439">
    <property type="entry name" value="ABC_transporter-like_ATP-bd"/>
</dbReference>
<dbReference type="InterPro" id="IPR017871">
    <property type="entry name" value="ABC_transporter-like_CS"/>
</dbReference>
<dbReference type="InterPro" id="IPR015860">
    <property type="entry name" value="ABC_transpr_TagH-like"/>
</dbReference>
<dbReference type="InterPro" id="IPR050683">
    <property type="entry name" value="Bact_Polysacc_Export_ATP-bd"/>
</dbReference>
<dbReference type="InterPro" id="IPR027417">
    <property type="entry name" value="P-loop_NTPase"/>
</dbReference>
<dbReference type="PANTHER" id="PTHR46743">
    <property type="entry name" value="TEICHOIC ACIDS EXPORT ATP-BINDING PROTEIN TAGH"/>
    <property type="match status" value="1"/>
</dbReference>
<dbReference type="PANTHER" id="PTHR46743:SF2">
    <property type="entry name" value="TEICHOIC ACIDS EXPORT ATP-BINDING PROTEIN TAGH"/>
    <property type="match status" value="1"/>
</dbReference>
<dbReference type="Pfam" id="PF00005">
    <property type="entry name" value="ABC_tran"/>
    <property type="match status" value="1"/>
</dbReference>
<dbReference type="SMART" id="SM00382">
    <property type="entry name" value="AAA"/>
    <property type="match status" value="1"/>
</dbReference>
<dbReference type="SUPFAM" id="SSF52540">
    <property type="entry name" value="P-loop containing nucleoside triphosphate hydrolases"/>
    <property type="match status" value="1"/>
</dbReference>
<dbReference type="PROSITE" id="PS00211">
    <property type="entry name" value="ABC_TRANSPORTER_1"/>
    <property type="match status" value="1"/>
</dbReference>
<dbReference type="PROSITE" id="PS50893">
    <property type="entry name" value="ABC_TRANSPORTER_2"/>
    <property type="match status" value="1"/>
</dbReference>
<sequence length="219" mass="24939">MIKIENLTKSYRTPTGRHYVFKNLNIIFPKGYNIALIGQNGAGKSTLLRIIGGIDRPDSGNIITEHKISWPVGLAGGFQGSLTGRENVKFVARLYAKRDELNERVDFVEEFSELGKYFDMPIKTYSSGMRSRLAFGLSMAFKFDYYLIDEITAVGDAKFKKKCSDIFDKIREKSHLIMVSHSERALKEYCDVAIYLNKEGQGKFYKNVTEAIADYKKDL</sequence>
<reference key="1">
    <citation type="journal article" date="1991" name="J. Bacteriol.">
        <title>Identification of two genes, kpsM and kpsT, in region 3 of the polysialic acid gene cluster of Escherichia coli K1.</title>
        <authorList>
            <person name="Pavelka M.S. Jr."/>
            <person name="Wright L.F."/>
            <person name="Silver R.P."/>
        </authorList>
    </citation>
    <scope>NUCLEOTIDE SEQUENCE [GENOMIC DNA]</scope>
    <source>
        <strain>K1</strain>
    </source>
</reference>
<reference key="2">
    <citation type="journal article" date="1994" name="J. Biol. Chem.">
        <title>Characterization of KpsT, the ATP-binding component of the ABC-transporter involved with the export of capsular polysialic acid in Escherichia coli K1.</title>
        <authorList>
            <person name="Pavelka M.S. Jr."/>
            <person name="Hayes S.F."/>
            <person name="Silver R.P."/>
        </authorList>
    </citation>
    <scope>CHARACTERIZATION</scope>
</reference>
<evidence type="ECO:0000255" key="1">
    <source>
        <dbReference type="PROSITE-ProRule" id="PRU00434"/>
    </source>
</evidence>
<evidence type="ECO:0000305" key="2"/>
<gene>
    <name type="primary">kpsT</name>
</gene>
<accession>P23888</accession>
<comment type="function">
    <text>Putative ATP-binding protein, and an energy coupling component for the transport of polysialic acid across the cytoplasmic membrane.</text>
</comment>
<comment type="subcellular location">
    <subcellularLocation>
        <location>Cell inner membrane</location>
        <topology>Peripheral membrane protein</topology>
    </subcellularLocation>
</comment>
<comment type="similarity">
    <text evidence="2">Belongs to the ABC transporter superfamily.</text>
</comment>
<protein>
    <recommendedName>
        <fullName>Polysialic acid transport ATP-binding protein KpsT</fullName>
    </recommendedName>
</protein>
<name>KPST1_ECOLX</name>
<feature type="chain" id="PRO_0000092394" description="Polysialic acid transport ATP-binding protein KpsT">
    <location>
        <begin position="1"/>
        <end position="219"/>
    </location>
</feature>
<feature type="domain" description="ABC transporter" evidence="1">
    <location>
        <begin position="2"/>
        <end position="218"/>
    </location>
</feature>
<feature type="binding site" evidence="1">
    <location>
        <begin position="38"/>
        <end position="45"/>
    </location>
    <ligand>
        <name>ATP</name>
        <dbReference type="ChEBI" id="CHEBI:30616"/>
    </ligand>
</feature>